<organism>
    <name type="scientific">Rhizorhabdus wittichii (strain DSM 6014 / CCUG 31198 / JCM 15750 / NBRC 105917 / EY 4224 / RW1)</name>
    <name type="common">Sphingomonas wittichii</name>
    <dbReference type="NCBI Taxonomy" id="392499"/>
    <lineage>
        <taxon>Bacteria</taxon>
        <taxon>Pseudomonadati</taxon>
        <taxon>Pseudomonadota</taxon>
        <taxon>Alphaproteobacteria</taxon>
        <taxon>Sphingomonadales</taxon>
        <taxon>Sphingomonadaceae</taxon>
        <taxon>Rhizorhabdus</taxon>
    </lineage>
</organism>
<proteinExistence type="inferred from homology"/>
<dbReference type="EC" id="4.2.1.59" evidence="1"/>
<dbReference type="EMBL" id="CP000699">
    <property type="protein sequence ID" value="ABQ66838.1"/>
    <property type="molecule type" value="Genomic_DNA"/>
</dbReference>
<dbReference type="SMR" id="A5V3H2"/>
<dbReference type="STRING" id="392499.Swit_0470"/>
<dbReference type="PaxDb" id="392499-Swit_0470"/>
<dbReference type="KEGG" id="swi:Swit_0470"/>
<dbReference type="eggNOG" id="COG0764">
    <property type="taxonomic scope" value="Bacteria"/>
</dbReference>
<dbReference type="HOGENOM" id="CLU_078912_1_0_5"/>
<dbReference type="OrthoDB" id="9772788at2"/>
<dbReference type="Proteomes" id="UP000001989">
    <property type="component" value="Chromosome"/>
</dbReference>
<dbReference type="GO" id="GO:0005737">
    <property type="term" value="C:cytoplasm"/>
    <property type="evidence" value="ECO:0007669"/>
    <property type="project" value="UniProtKB-SubCell"/>
</dbReference>
<dbReference type="GO" id="GO:0016020">
    <property type="term" value="C:membrane"/>
    <property type="evidence" value="ECO:0007669"/>
    <property type="project" value="GOC"/>
</dbReference>
<dbReference type="GO" id="GO:0019171">
    <property type="term" value="F:(3R)-hydroxyacyl-[acyl-carrier-protein] dehydratase activity"/>
    <property type="evidence" value="ECO:0007669"/>
    <property type="project" value="UniProtKB-EC"/>
</dbReference>
<dbReference type="GO" id="GO:0006633">
    <property type="term" value="P:fatty acid biosynthetic process"/>
    <property type="evidence" value="ECO:0007669"/>
    <property type="project" value="UniProtKB-UniRule"/>
</dbReference>
<dbReference type="GO" id="GO:0009245">
    <property type="term" value="P:lipid A biosynthetic process"/>
    <property type="evidence" value="ECO:0007669"/>
    <property type="project" value="UniProtKB-UniRule"/>
</dbReference>
<dbReference type="CDD" id="cd01288">
    <property type="entry name" value="FabZ"/>
    <property type="match status" value="1"/>
</dbReference>
<dbReference type="FunFam" id="3.10.129.10:FF:000001">
    <property type="entry name" value="3-hydroxyacyl-[acyl-carrier-protein] dehydratase FabZ"/>
    <property type="match status" value="1"/>
</dbReference>
<dbReference type="Gene3D" id="3.10.129.10">
    <property type="entry name" value="Hotdog Thioesterase"/>
    <property type="match status" value="1"/>
</dbReference>
<dbReference type="HAMAP" id="MF_00406">
    <property type="entry name" value="FabZ"/>
    <property type="match status" value="1"/>
</dbReference>
<dbReference type="InterPro" id="IPR013114">
    <property type="entry name" value="FabA_FabZ"/>
</dbReference>
<dbReference type="InterPro" id="IPR010084">
    <property type="entry name" value="FabZ"/>
</dbReference>
<dbReference type="InterPro" id="IPR029069">
    <property type="entry name" value="HotDog_dom_sf"/>
</dbReference>
<dbReference type="NCBIfam" id="TIGR01750">
    <property type="entry name" value="fabZ"/>
    <property type="match status" value="1"/>
</dbReference>
<dbReference type="NCBIfam" id="NF000582">
    <property type="entry name" value="PRK00006.1"/>
    <property type="match status" value="1"/>
</dbReference>
<dbReference type="PANTHER" id="PTHR30272">
    <property type="entry name" value="3-HYDROXYACYL-[ACYL-CARRIER-PROTEIN] DEHYDRATASE"/>
    <property type="match status" value="1"/>
</dbReference>
<dbReference type="PANTHER" id="PTHR30272:SF1">
    <property type="entry name" value="3-HYDROXYACYL-[ACYL-CARRIER-PROTEIN] DEHYDRATASE"/>
    <property type="match status" value="1"/>
</dbReference>
<dbReference type="Pfam" id="PF07977">
    <property type="entry name" value="FabA"/>
    <property type="match status" value="1"/>
</dbReference>
<dbReference type="SUPFAM" id="SSF54637">
    <property type="entry name" value="Thioesterase/thiol ester dehydrase-isomerase"/>
    <property type="match status" value="1"/>
</dbReference>
<comment type="function">
    <text evidence="1">Involved in unsaturated fatty acids biosynthesis. Catalyzes the dehydration of short chain beta-hydroxyacyl-ACPs and long chain saturated and unsaturated beta-hydroxyacyl-ACPs.</text>
</comment>
<comment type="catalytic activity">
    <reaction evidence="1">
        <text>a (3R)-hydroxyacyl-[ACP] = a (2E)-enoyl-[ACP] + H2O</text>
        <dbReference type="Rhea" id="RHEA:13097"/>
        <dbReference type="Rhea" id="RHEA-COMP:9925"/>
        <dbReference type="Rhea" id="RHEA-COMP:9945"/>
        <dbReference type="ChEBI" id="CHEBI:15377"/>
        <dbReference type="ChEBI" id="CHEBI:78784"/>
        <dbReference type="ChEBI" id="CHEBI:78827"/>
        <dbReference type="EC" id="4.2.1.59"/>
    </reaction>
</comment>
<comment type="subcellular location">
    <subcellularLocation>
        <location evidence="1">Cytoplasm</location>
    </subcellularLocation>
</comment>
<comment type="similarity">
    <text evidence="1">Belongs to the thioester dehydratase family. FabZ subfamily.</text>
</comment>
<accession>A5V3H2</accession>
<sequence>MSEDAPKILGPLDVRRVMAALPHRYPLLLVDRVEELVVDERITAIKAVTINENFFQGHFPGRPIMPGVLIVEAMAQAAGVLAVESLGLAGSGKLVYFMTIDEVKFRTPVEPGVLLRLEVAFAQKRGSVCKFEGKAYIGDKLAAQANFTAMIADPPTD</sequence>
<protein>
    <recommendedName>
        <fullName evidence="1">3-hydroxyacyl-[acyl-carrier-protein] dehydratase FabZ</fullName>
        <ecNumber evidence="1">4.2.1.59</ecNumber>
    </recommendedName>
    <alternativeName>
        <fullName evidence="1">(3R)-hydroxymyristoyl-[acyl-carrier-protein] dehydratase</fullName>
        <shortName evidence="1">(3R)-hydroxymyristoyl-ACP dehydrase</shortName>
    </alternativeName>
    <alternativeName>
        <fullName evidence="1">Beta-hydroxyacyl-ACP dehydratase</fullName>
    </alternativeName>
</protein>
<feature type="chain" id="PRO_0000340804" description="3-hydroxyacyl-[acyl-carrier-protein] dehydratase FabZ">
    <location>
        <begin position="1"/>
        <end position="157"/>
    </location>
</feature>
<feature type="active site" evidence="1">
    <location>
        <position position="58"/>
    </location>
</feature>
<reference key="1">
    <citation type="journal article" date="2010" name="J. Bacteriol.">
        <title>Genome sequence of the dioxin-mineralizing bacterium Sphingomonas wittichii RW1.</title>
        <authorList>
            <person name="Miller T.R."/>
            <person name="Delcher A.L."/>
            <person name="Salzberg S.L."/>
            <person name="Saunders E."/>
            <person name="Detter J.C."/>
            <person name="Halden R.U."/>
        </authorList>
    </citation>
    <scope>NUCLEOTIDE SEQUENCE [LARGE SCALE GENOMIC DNA]</scope>
    <source>
        <strain>DSM 6014 / CCUG 31198 / JCM 15750 / NBRC 105917 / EY 4224 / RW1</strain>
    </source>
</reference>
<evidence type="ECO:0000255" key="1">
    <source>
        <dbReference type="HAMAP-Rule" id="MF_00406"/>
    </source>
</evidence>
<name>FABZ_RHIWR</name>
<keyword id="KW-0963">Cytoplasm</keyword>
<keyword id="KW-0441">Lipid A biosynthesis</keyword>
<keyword id="KW-0444">Lipid biosynthesis</keyword>
<keyword id="KW-0443">Lipid metabolism</keyword>
<keyword id="KW-0456">Lyase</keyword>
<keyword id="KW-1185">Reference proteome</keyword>
<gene>
    <name evidence="1" type="primary">fabZ</name>
    <name type="ordered locus">Swit_0470</name>
</gene>